<protein>
    <recommendedName>
        <fullName evidence="1">Cell division activator CedA</fullName>
    </recommendedName>
</protein>
<reference key="1">
    <citation type="journal article" date="2008" name="DNA Res.">
        <title>Complete genome sequence and comparative analysis of the wild-type commensal Escherichia coli strain SE11 isolated from a healthy adult.</title>
        <authorList>
            <person name="Oshima K."/>
            <person name="Toh H."/>
            <person name="Ogura Y."/>
            <person name="Sasamoto H."/>
            <person name="Morita H."/>
            <person name="Park S.-H."/>
            <person name="Ooka T."/>
            <person name="Iyoda S."/>
            <person name="Taylor T.D."/>
            <person name="Hayashi T."/>
            <person name="Itoh K."/>
            <person name="Hattori M."/>
        </authorList>
    </citation>
    <scope>NUCLEOTIDE SEQUENCE [LARGE SCALE GENOMIC DNA]</scope>
    <source>
        <strain>SE11</strain>
    </source>
</reference>
<comment type="function">
    <text evidence="1">Activates the cell division inhibited by chromosomal DNA over-replication.</text>
</comment>
<comment type="similarity">
    <text evidence="1">Belongs to the CedA family.</text>
</comment>
<proteinExistence type="inferred from homology"/>
<accession>B6IBF1</accession>
<dbReference type="EMBL" id="AP009240">
    <property type="protein sequence ID" value="BAG77425.1"/>
    <property type="molecule type" value="Genomic_DNA"/>
</dbReference>
<dbReference type="SMR" id="B6IBF1"/>
<dbReference type="KEGG" id="ecy:ECSE_1901"/>
<dbReference type="HOGENOM" id="CLU_167445_0_0_6"/>
<dbReference type="Proteomes" id="UP000008199">
    <property type="component" value="Chromosome"/>
</dbReference>
<dbReference type="GO" id="GO:0003677">
    <property type="term" value="F:DNA binding"/>
    <property type="evidence" value="ECO:0007669"/>
    <property type="project" value="UniProtKB-UniRule"/>
</dbReference>
<dbReference type="GO" id="GO:0051301">
    <property type="term" value="P:cell division"/>
    <property type="evidence" value="ECO:0007669"/>
    <property type="project" value="UniProtKB-UniRule"/>
</dbReference>
<dbReference type="FunFam" id="3.30.730.20:FF:000001">
    <property type="entry name" value="Cell division activator CedA"/>
    <property type="match status" value="1"/>
</dbReference>
<dbReference type="Gene3D" id="3.30.730.20">
    <property type="entry name" value="Cell division activator CedA"/>
    <property type="match status" value="1"/>
</dbReference>
<dbReference type="HAMAP" id="MF_01580">
    <property type="entry name" value="CedA"/>
    <property type="match status" value="1"/>
</dbReference>
<dbReference type="InterPro" id="IPR038463">
    <property type="entry name" value="CedA-like_sf"/>
</dbReference>
<dbReference type="InterPro" id="IPR019666">
    <property type="entry name" value="Cell_div_activator_CedA"/>
</dbReference>
<dbReference type="NCBIfam" id="NF007510">
    <property type="entry name" value="PRK10113.1"/>
    <property type="match status" value="1"/>
</dbReference>
<dbReference type="Pfam" id="PF10729">
    <property type="entry name" value="CedA"/>
    <property type="match status" value="1"/>
</dbReference>
<name>CEDA_ECOSE</name>
<gene>
    <name evidence="1" type="primary">cedA</name>
    <name type="ordered locus">ECSE_1901</name>
</gene>
<sequence>MKKPLRQQNRQIISYVPRTEPAPPEHAIKMDSFRDVWMLRGKYVAFVLMGESFLRSPAFTVPESAQRWANQIRQEGEVTE</sequence>
<keyword id="KW-0131">Cell cycle</keyword>
<keyword id="KW-0132">Cell division</keyword>
<keyword id="KW-0238">DNA-binding</keyword>
<evidence type="ECO:0000255" key="1">
    <source>
        <dbReference type="HAMAP-Rule" id="MF_01580"/>
    </source>
</evidence>
<organism>
    <name type="scientific">Escherichia coli (strain SE11)</name>
    <dbReference type="NCBI Taxonomy" id="409438"/>
    <lineage>
        <taxon>Bacteria</taxon>
        <taxon>Pseudomonadati</taxon>
        <taxon>Pseudomonadota</taxon>
        <taxon>Gammaproteobacteria</taxon>
        <taxon>Enterobacterales</taxon>
        <taxon>Enterobacteriaceae</taxon>
        <taxon>Escherichia</taxon>
    </lineage>
</organism>
<feature type="chain" id="PRO_1000200987" description="Cell division activator CedA">
    <location>
        <begin position="1"/>
        <end position="80"/>
    </location>
</feature>